<comment type="function">
    <text>Binding to cells via a high affinity receptor, laminin is thought to mediate the attachment, migration and organization of cells into tissues during embryonic development by interacting with other extracellular matrix components.</text>
</comment>
<comment type="subunit">
    <text>Laminin is a complex glycoprotein, consisting of three different polypeptide chains (alpha, beta, gamma), which are bound to each other by disulfide bonds into a cross-shaped molecule comprising one long and three short arms with globules at each end. Alpha-1 is a subunit of laminin-1 (laminin-111 or EHS laminin) and laminin-3 (laminin-121 or S-laminin).</text>
</comment>
<comment type="interaction">
    <interactant intactId="EBI-7176628">
        <id>P19137</id>
    </interactant>
    <interactant intactId="EBI-8522926">
        <id>O18738</id>
        <label>DAG1</label>
    </interactant>
    <organismsDiffer>true</organismsDiffer>
    <experiments>2</experiments>
</comment>
<comment type="subcellular location">
    <subcellularLocation>
        <location>Secreted</location>
        <location>Extracellular space</location>
        <location>Extracellular matrix</location>
        <location>Basement membrane</location>
    </subcellularLocation>
    <text>Major component.</text>
</comment>
<comment type="domain">
    <text>The alpha-helical domains I and II are thought to interact with other laminin chains to form a coiled coil structure.</text>
</comment>
<comment type="domain">
    <text>Domains VI, IV and G are globular.</text>
</comment>
<comment type="PTM">
    <text evidence="1">Tyrosine phosphorylated by PKDCC/VLK.</text>
</comment>
<feature type="signal peptide" evidence="7">
    <location>
        <begin position="1"/>
        <end position="24"/>
    </location>
</feature>
<feature type="chain" id="PRO_0000017055" description="Laminin subunit alpha-1">
    <location>
        <begin position="25"/>
        <end position="3083"/>
    </location>
</feature>
<feature type="domain" description="Laminin N-terminal" evidence="6">
    <location>
        <begin position="25"/>
        <end position="276"/>
    </location>
</feature>
<feature type="domain" description="Laminin EGF-like 1" evidence="5">
    <location>
        <begin position="277"/>
        <end position="333"/>
    </location>
</feature>
<feature type="domain" description="Laminin EGF-like 2" evidence="5">
    <location>
        <begin position="334"/>
        <end position="403"/>
    </location>
</feature>
<feature type="domain" description="Laminin EGF-like 3" evidence="5">
    <location>
        <begin position="404"/>
        <end position="460"/>
    </location>
</feature>
<feature type="domain" description="Laminin EGF-like 4" evidence="5">
    <location>
        <begin position="461"/>
        <end position="509"/>
    </location>
</feature>
<feature type="domain" description="Laminin EGF-like 5; first part" evidence="5">
    <location>
        <begin position="510"/>
        <end position="519"/>
    </location>
</feature>
<feature type="domain" description="Laminin IV type A 1" evidence="4">
    <location>
        <begin position="523"/>
        <end position="715"/>
    </location>
</feature>
<feature type="domain" description="Laminin EGF-like 5; second part" evidence="5">
    <location>
        <begin position="716"/>
        <end position="748"/>
    </location>
</feature>
<feature type="domain" description="Laminin EGF-like 6" evidence="5">
    <location>
        <begin position="749"/>
        <end position="797"/>
    </location>
</feature>
<feature type="domain" description="Laminin EGF-like 7" evidence="5">
    <location>
        <begin position="798"/>
        <end position="855"/>
    </location>
</feature>
<feature type="domain" description="Laminin EGF-like 8" evidence="5">
    <location>
        <begin position="856"/>
        <end position="908"/>
    </location>
</feature>
<feature type="domain" description="Laminin EGF-like 9" evidence="5">
    <location>
        <begin position="909"/>
        <end position="957"/>
    </location>
</feature>
<feature type="domain" description="Laminin EGF-like 10" evidence="5">
    <location>
        <begin position="958"/>
        <end position="1004"/>
    </location>
</feature>
<feature type="domain" description="Laminin EGF-like 11" evidence="5">
    <location>
        <begin position="1005"/>
        <end position="1050"/>
    </location>
</feature>
<feature type="domain" description="Laminin EGF-like 12" evidence="5">
    <location>
        <begin position="1051"/>
        <end position="1096"/>
    </location>
</feature>
<feature type="domain" description="Laminin EGF-like 13" evidence="5">
    <location>
        <begin position="1097"/>
        <end position="1156"/>
    </location>
</feature>
<feature type="domain" description="Laminin EGF-like 14; first part" evidence="5">
    <location>
        <begin position="1157"/>
        <end position="1166"/>
    </location>
</feature>
<feature type="domain" description="Laminin IV type A 2" evidence="4">
    <location>
        <begin position="1177"/>
        <end position="1368"/>
    </location>
</feature>
<feature type="domain" description="Laminin EGF-like 14; second part" evidence="5">
    <location>
        <begin position="1369"/>
        <end position="1409"/>
    </location>
</feature>
<feature type="domain" description="Laminin EGF-like 15" evidence="5">
    <location>
        <begin position="1410"/>
        <end position="1458"/>
    </location>
</feature>
<feature type="domain" description="Laminin EGF-like 16" evidence="5">
    <location>
        <begin position="1459"/>
        <end position="1515"/>
    </location>
</feature>
<feature type="domain" description="Laminin EGF-like 17" evidence="5">
    <location>
        <begin position="1516"/>
        <end position="1562"/>
    </location>
</feature>
<feature type="domain" description="Laminin G-like 1" evidence="3">
    <location>
        <begin position="2124"/>
        <end position="2304"/>
    </location>
</feature>
<feature type="domain" description="Laminin G-like 2" evidence="3">
    <location>
        <begin position="2312"/>
        <end position="2488"/>
    </location>
</feature>
<feature type="domain" description="Laminin G-like 3" evidence="3">
    <location>
        <begin position="2493"/>
        <end position="2679"/>
    </location>
</feature>
<feature type="domain" description="Laminin G-like 4" evidence="3">
    <location>
        <begin position="2721"/>
        <end position="2893"/>
    </location>
</feature>
<feature type="domain" description="Laminin G-like 5" evidence="3">
    <location>
        <begin position="2898"/>
        <end position="3078"/>
    </location>
</feature>
<feature type="region of interest" description="Domain II and I">
    <location>
        <begin position="1564"/>
        <end position="2123"/>
    </location>
</feature>
<feature type="coiled-coil region" evidence="2">
    <location>
        <begin position="1617"/>
        <end position="1691"/>
    </location>
</feature>
<feature type="coiled-coil region" evidence="2">
    <location>
        <begin position="1723"/>
        <end position="1809"/>
    </location>
</feature>
<feature type="coiled-coil region" evidence="2">
    <location>
        <begin position="1868"/>
        <end position="1901"/>
    </location>
</feature>
<feature type="short sequence motif" description="Cell attachment site">
    <location>
        <begin position="1147"/>
        <end position="1149"/>
    </location>
</feature>
<feature type="modified residue" description="Pyrrolidone carboxylic acid" evidence="7">
    <location>
        <position position="25"/>
    </location>
</feature>
<feature type="glycosylation site" description="N-linked (GlcNAc...) asparagine" evidence="2">
    <location>
        <position position="370"/>
    </location>
</feature>
<feature type="glycosylation site" description="N-linked (GlcNAc...) asparagine" evidence="2">
    <location>
        <position position="672"/>
    </location>
</feature>
<feature type="glycosylation site" description="N-linked (GlcNAc...) asparagine" evidence="8">
    <location>
        <position position="1344"/>
    </location>
</feature>
<feature type="glycosylation site" description="N-linked (GlcNAc...) asparagine" evidence="2">
    <location>
        <position position="1659"/>
    </location>
</feature>
<feature type="glycosylation site" description="N-linked (GlcNAc...) asparagine" evidence="8">
    <location>
        <position position="1686"/>
    </location>
</feature>
<feature type="glycosylation site" description="N-linked (GlcNAc...) asparagine" evidence="8">
    <location>
        <position position="1718"/>
    </location>
</feature>
<feature type="glycosylation site" description="N-linked (GlcNAc...) asparagine" evidence="8">
    <location>
        <position position="1725"/>
    </location>
</feature>
<feature type="glycosylation site" description="N-linked (GlcNAc...) asparagine" evidence="8">
    <location>
        <position position="1763"/>
    </location>
</feature>
<feature type="glycosylation site" description="N-linked (GlcNAc...) asparagine" evidence="2">
    <location>
        <position position="1811"/>
    </location>
</feature>
<feature type="glycosylation site" description="N-linked (GlcNAc...) asparagine" evidence="8">
    <location>
        <position position="1935"/>
    </location>
</feature>
<feature type="glycosylation site" description="N-linked (GlcNAc...) asparagine" evidence="8">
    <location>
        <position position="2026"/>
    </location>
</feature>
<feature type="glycosylation site" description="N-linked (GlcNAc...) asparagine" evidence="8">
    <location>
        <position position="2045"/>
    </location>
</feature>
<feature type="glycosylation site" description="N-linked (GlcNAc...) asparagine" evidence="8">
    <location>
        <position position="2066"/>
    </location>
</feature>
<feature type="glycosylation site" description="N-linked (GlcNAc...) asparagine" evidence="2">
    <location>
        <position position="2355"/>
    </location>
</feature>
<feature type="glycosylation site" description="N-linked (GlcNAc...) asparagine" evidence="8">
    <location>
        <position position="2834"/>
    </location>
</feature>
<feature type="glycosylation site" description="N-linked (GlcNAc...) asparagine" evidence="2">
    <location>
        <position position="2923"/>
    </location>
</feature>
<feature type="disulfide bond" evidence="5">
    <location>
        <begin position="277"/>
        <end position="286"/>
    </location>
</feature>
<feature type="disulfide bond" evidence="5">
    <location>
        <begin position="279"/>
        <end position="297"/>
    </location>
</feature>
<feature type="disulfide bond" evidence="5">
    <location>
        <begin position="299"/>
        <end position="308"/>
    </location>
</feature>
<feature type="disulfide bond" evidence="5">
    <location>
        <begin position="311"/>
        <end position="331"/>
    </location>
</feature>
<feature type="disulfide bond" evidence="5">
    <location>
        <begin position="334"/>
        <end position="343"/>
    </location>
</feature>
<feature type="disulfide bond" evidence="5">
    <location>
        <begin position="336"/>
        <end position="368"/>
    </location>
</feature>
<feature type="disulfide bond" evidence="5">
    <location>
        <begin position="371"/>
        <end position="380"/>
    </location>
</feature>
<feature type="disulfide bond" evidence="5">
    <location>
        <begin position="383"/>
        <end position="401"/>
    </location>
</feature>
<feature type="disulfide bond" evidence="5">
    <location>
        <begin position="404"/>
        <end position="416"/>
    </location>
</feature>
<feature type="disulfide bond" evidence="5">
    <location>
        <begin position="406"/>
        <end position="434"/>
    </location>
</feature>
<feature type="disulfide bond" evidence="5">
    <location>
        <begin position="436"/>
        <end position="445"/>
    </location>
</feature>
<feature type="disulfide bond" evidence="5">
    <location>
        <begin position="448"/>
        <end position="458"/>
    </location>
</feature>
<feature type="disulfide bond" evidence="5">
    <location>
        <begin position="461"/>
        <end position="474"/>
    </location>
</feature>
<feature type="disulfide bond" evidence="5">
    <location>
        <begin position="463"/>
        <end position="478"/>
    </location>
</feature>
<feature type="disulfide bond" evidence="5">
    <location>
        <begin position="480"/>
        <end position="489"/>
    </location>
</feature>
<feature type="disulfide bond" evidence="5">
    <location>
        <begin position="492"/>
        <end position="507"/>
    </location>
</feature>
<feature type="disulfide bond" evidence="5">
    <location>
        <begin position="749"/>
        <end position="758"/>
    </location>
</feature>
<feature type="disulfide bond" evidence="5">
    <location>
        <begin position="751"/>
        <end position="764"/>
    </location>
</feature>
<feature type="disulfide bond" evidence="5">
    <location>
        <begin position="767"/>
        <end position="776"/>
    </location>
</feature>
<feature type="disulfide bond" evidence="5">
    <location>
        <begin position="779"/>
        <end position="795"/>
    </location>
</feature>
<feature type="disulfide bond" evidence="5">
    <location>
        <begin position="798"/>
        <end position="813"/>
    </location>
</feature>
<feature type="disulfide bond" evidence="5">
    <location>
        <begin position="800"/>
        <end position="823"/>
    </location>
</feature>
<feature type="disulfide bond" evidence="5">
    <location>
        <begin position="826"/>
        <end position="835"/>
    </location>
</feature>
<feature type="disulfide bond" evidence="5">
    <location>
        <begin position="838"/>
        <end position="853"/>
    </location>
</feature>
<feature type="disulfide bond" evidence="5">
    <location>
        <begin position="856"/>
        <end position="870"/>
    </location>
</feature>
<feature type="disulfide bond" evidence="5">
    <location>
        <begin position="858"/>
        <end position="877"/>
    </location>
</feature>
<feature type="disulfide bond" evidence="5">
    <location>
        <begin position="880"/>
        <end position="889"/>
    </location>
</feature>
<feature type="disulfide bond" evidence="5">
    <location>
        <begin position="892"/>
        <end position="906"/>
    </location>
</feature>
<feature type="disulfide bond" evidence="5">
    <location>
        <begin position="909"/>
        <end position="921"/>
    </location>
</feature>
<feature type="disulfide bond" evidence="5">
    <location>
        <begin position="911"/>
        <end position="928"/>
    </location>
</feature>
<feature type="disulfide bond" evidence="5">
    <location>
        <begin position="930"/>
        <end position="939"/>
    </location>
</feature>
<feature type="disulfide bond" evidence="5">
    <location>
        <begin position="942"/>
        <end position="955"/>
    </location>
</feature>
<feature type="disulfide bond" evidence="5">
    <location>
        <begin position="958"/>
        <end position="970"/>
    </location>
</feature>
<feature type="disulfide bond" evidence="5">
    <location>
        <begin position="960"/>
        <end position="976"/>
    </location>
</feature>
<feature type="disulfide bond" evidence="5">
    <location>
        <begin position="978"/>
        <end position="987"/>
    </location>
</feature>
<feature type="disulfide bond" evidence="5">
    <location>
        <begin position="990"/>
        <end position="1002"/>
    </location>
</feature>
<feature type="disulfide bond" evidence="5">
    <location>
        <begin position="1005"/>
        <end position="1014"/>
    </location>
</feature>
<feature type="disulfide bond" evidence="5">
    <location>
        <begin position="1007"/>
        <end position="1021"/>
    </location>
</feature>
<feature type="disulfide bond" evidence="5">
    <location>
        <begin position="1023"/>
        <end position="1032"/>
    </location>
</feature>
<feature type="disulfide bond" evidence="5">
    <location>
        <begin position="1035"/>
        <end position="1048"/>
    </location>
</feature>
<feature type="disulfide bond" evidence="5">
    <location>
        <begin position="1051"/>
        <end position="1063"/>
    </location>
</feature>
<feature type="disulfide bond" evidence="5">
    <location>
        <begin position="1053"/>
        <end position="1070"/>
    </location>
</feature>
<feature type="disulfide bond" evidence="5">
    <location>
        <begin position="1072"/>
        <end position="1081"/>
    </location>
</feature>
<feature type="disulfide bond" evidence="5">
    <location>
        <begin position="1084"/>
        <end position="1094"/>
    </location>
</feature>
<feature type="disulfide bond" evidence="5">
    <location>
        <begin position="1097"/>
        <end position="1109"/>
    </location>
</feature>
<feature type="disulfide bond" evidence="5">
    <location>
        <begin position="1099"/>
        <end position="1125"/>
    </location>
</feature>
<feature type="disulfide bond" evidence="5">
    <location>
        <begin position="1127"/>
        <end position="1136"/>
    </location>
</feature>
<feature type="disulfide bond" evidence="5">
    <location>
        <begin position="1139"/>
        <end position="1154"/>
    </location>
</feature>
<feature type="disulfide bond" evidence="5">
    <location>
        <begin position="1410"/>
        <end position="1419"/>
    </location>
</feature>
<feature type="disulfide bond" evidence="5">
    <location>
        <begin position="1412"/>
        <end position="1426"/>
    </location>
</feature>
<feature type="disulfide bond" evidence="5">
    <location>
        <begin position="1429"/>
        <end position="1438"/>
    </location>
</feature>
<feature type="disulfide bond" evidence="5">
    <location>
        <begin position="1441"/>
        <end position="1456"/>
    </location>
</feature>
<feature type="disulfide bond" evidence="5">
    <location>
        <begin position="1459"/>
        <end position="1473"/>
    </location>
</feature>
<feature type="disulfide bond" evidence="5">
    <location>
        <begin position="1461"/>
        <end position="1483"/>
    </location>
</feature>
<feature type="disulfide bond" evidence="5">
    <location>
        <begin position="1486"/>
        <end position="1495"/>
    </location>
</feature>
<feature type="disulfide bond" evidence="5">
    <location>
        <begin position="1498"/>
        <end position="1513"/>
    </location>
</feature>
<feature type="disulfide bond" evidence="5">
    <location>
        <begin position="1516"/>
        <end position="1528"/>
    </location>
</feature>
<feature type="disulfide bond" evidence="5">
    <location>
        <begin position="1518"/>
        <end position="1535"/>
    </location>
</feature>
<feature type="disulfide bond" evidence="5">
    <location>
        <begin position="1537"/>
        <end position="1546"/>
    </location>
</feature>
<feature type="disulfide bond" evidence="5">
    <location>
        <begin position="1549"/>
        <end position="1560"/>
    </location>
</feature>
<feature type="disulfide bond" description="Interchain" evidence="9">
    <location>
        <position position="1563"/>
    </location>
</feature>
<feature type="disulfide bond" description="Interchain" evidence="9">
    <location>
        <position position="1567"/>
    </location>
</feature>
<feature type="disulfide bond" evidence="3">
    <location>
        <begin position="2278"/>
        <end position="2304"/>
    </location>
</feature>
<feature type="disulfide bond" evidence="3">
    <location>
        <begin position="2464"/>
        <end position="2488"/>
    </location>
</feature>
<feature type="disulfide bond" evidence="3">
    <location>
        <begin position="2652"/>
        <end position="2679"/>
    </location>
</feature>
<feature type="disulfide bond" evidence="3">
    <location>
        <begin position="2868"/>
        <end position="2893"/>
    </location>
</feature>
<feature type="disulfide bond" evidence="3">
    <location>
        <begin position="3047"/>
        <end position="3078"/>
    </location>
</feature>
<feature type="sequence conflict" description="In Ref. 3; CAA30561." evidence="9" ref="3">
    <original>I</original>
    <variation>T</variation>
    <location>
        <position position="209"/>
    </location>
</feature>
<feature type="sequence conflict" description="In Ref. 1; AAA39410." evidence="9" ref="1">
    <original>D</original>
    <variation>N</variation>
    <location>
        <position position="656"/>
    </location>
</feature>
<feature type="sequence conflict" description="In Ref. 1; AAA39410." evidence="9" ref="1">
    <original>I</original>
    <variation>V</variation>
    <location>
        <position position="920"/>
    </location>
</feature>
<feature type="sequence conflict" description="In Ref. 1; AAA39410." evidence="9" ref="1">
    <original>G</original>
    <variation>S</variation>
    <location>
        <position position="1122"/>
    </location>
</feature>
<feature type="sequence conflict" description="In Ref. 1; AAA39410." evidence="9" ref="1">
    <original>A</original>
    <variation>V</variation>
    <location>
        <position position="1131"/>
    </location>
</feature>
<feature type="sequence conflict" description="In Ref. 1; AAA39410." evidence="9" ref="1">
    <original>R</original>
    <variation>Q</variation>
    <location>
        <position position="1295"/>
    </location>
</feature>
<feature type="sequence conflict" description="In Ref. 1; AAA39410." evidence="9" ref="1">
    <original>K</original>
    <variation>KE</variation>
    <location>
        <position position="1797"/>
    </location>
</feature>
<feature type="sequence conflict" description="In Ref. 1; AAA39410." evidence="9" ref="1">
    <original>S</original>
    <variation>G</variation>
    <location>
        <position position="1964"/>
    </location>
</feature>
<feature type="sequence conflict" description="In Ref. 1; AAA39410." evidence="9" ref="1">
    <original>MDNIM</original>
    <variation>VDNIT</variation>
    <location>
        <begin position="1990"/>
        <end position="1994"/>
    </location>
</feature>
<feature type="sequence conflict" description="In Ref. 1; AAA39410." evidence="9" ref="1">
    <original>V</original>
    <variation>A</variation>
    <location>
        <position position="2120"/>
    </location>
</feature>
<feature type="turn" evidence="12">
    <location>
        <begin position="2084"/>
        <end position="2088"/>
    </location>
</feature>
<feature type="helix" evidence="12">
    <location>
        <begin position="2089"/>
        <end position="2091"/>
    </location>
</feature>
<feature type="helix" evidence="12">
    <location>
        <begin position="2092"/>
        <end position="2121"/>
    </location>
</feature>
<feature type="strand" evidence="12">
    <location>
        <begin position="2126"/>
        <end position="2131"/>
    </location>
</feature>
<feature type="strand" evidence="12">
    <location>
        <begin position="2134"/>
        <end position="2137"/>
    </location>
</feature>
<feature type="strand" evidence="12">
    <location>
        <begin position="2143"/>
        <end position="2154"/>
    </location>
</feature>
<feature type="strand" evidence="12">
    <location>
        <begin position="2160"/>
        <end position="2166"/>
    </location>
</feature>
<feature type="strand" evidence="12">
    <location>
        <begin position="2173"/>
        <end position="2179"/>
    </location>
</feature>
<feature type="strand" evidence="12">
    <location>
        <begin position="2182"/>
        <end position="2191"/>
    </location>
</feature>
<feature type="strand" evidence="12">
    <location>
        <begin position="2193"/>
        <end position="2198"/>
    </location>
</feature>
<feature type="strand" evidence="12">
    <location>
        <begin position="2205"/>
        <end position="2207"/>
    </location>
</feature>
<feature type="strand" evidence="12">
    <location>
        <begin position="2209"/>
        <end position="2216"/>
    </location>
</feature>
<feature type="strand" evidence="12">
    <location>
        <begin position="2219"/>
        <end position="2226"/>
    </location>
</feature>
<feature type="strand" evidence="12">
    <location>
        <begin position="2236"/>
        <end position="2239"/>
    </location>
</feature>
<feature type="strand" evidence="12">
    <location>
        <begin position="2241"/>
        <end position="2243"/>
    </location>
</feature>
<feature type="strand" evidence="12">
    <location>
        <begin position="2254"/>
        <end position="2259"/>
    </location>
</feature>
<feature type="strand" evidence="12">
    <location>
        <begin position="2262"/>
        <end position="2264"/>
    </location>
</feature>
<feature type="strand" evidence="12">
    <location>
        <begin position="2276"/>
        <end position="2279"/>
    </location>
</feature>
<feature type="strand" evidence="12">
    <location>
        <begin position="2295"/>
        <end position="2299"/>
    </location>
</feature>
<feature type="strand" evidence="12">
    <location>
        <begin position="2302"/>
        <end position="2304"/>
    </location>
</feature>
<feature type="strand" evidence="12">
    <location>
        <begin position="2315"/>
        <end position="2325"/>
    </location>
</feature>
<feature type="strand" evidence="12">
    <location>
        <begin position="2333"/>
        <end position="2341"/>
    </location>
</feature>
<feature type="strand" evidence="12">
    <location>
        <begin position="2345"/>
        <end position="2352"/>
    </location>
</feature>
<feature type="strand" evidence="12">
    <location>
        <begin position="2360"/>
        <end position="2366"/>
    </location>
</feature>
<feature type="strand" evidence="12">
    <location>
        <begin position="2369"/>
        <end position="2378"/>
    </location>
</feature>
<feature type="strand" evidence="12">
    <location>
        <begin position="2380"/>
        <end position="2384"/>
    </location>
</feature>
<feature type="strand" evidence="12">
    <location>
        <begin position="2395"/>
        <end position="2402"/>
    </location>
</feature>
<feature type="strand" evidence="12">
    <location>
        <begin position="2405"/>
        <end position="2412"/>
    </location>
</feature>
<feature type="strand" evidence="12">
    <location>
        <begin position="2415"/>
        <end position="2425"/>
    </location>
</feature>
<feature type="strand" evidence="12">
    <location>
        <begin position="2427"/>
        <end position="2429"/>
    </location>
</feature>
<feature type="strand" evidence="12">
    <location>
        <begin position="2441"/>
        <end position="2445"/>
    </location>
</feature>
<feature type="strand" evidence="12">
    <location>
        <begin position="2462"/>
        <end position="2470"/>
    </location>
</feature>
<feature type="strand" evidence="12">
    <location>
        <begin position="2479"/>
        <end position="2487"/>
    </location>
</feature>
<feature type="strand" evidence="12">
    <location>
        <begin position="2495"/>
        <end position="2506"/>
    </location>
</feature>
<feature type="strand" evidence="12">
    <location>
        <begin position="2516"/>
        <end position="2526"/>
    </location>
</feature>
<feature type="strand" evidence="12">
    <location>
        <begin position="2528"/>
        <end position="2534"/>
    </location>
</feature>
<feature type="strand" evidence="12">
    <location>
        <begin position="2550"/>
        <end position="2556"/>
    </location>
</feature>
<feature type="strand" evidence="12">
    <location>
        <begin position="2559"/>
        <end position="2565"/>
    </location>
</feature>
<feature type="strand" evidence="12">
    <location>
        <begin position="2567"/>
        <end position="2569"/>
    </location>
</feature>
<feature type="strand" evidence="12">
    <location>
        <begin position="2573"/>
        <end position="2577"/>
    </location>
</feature>
<feature type="strand" evidence="12">
    <location>
        <begin position="2580"/>
        <end position="2582"/>
    </location>
</feature>
<feature type="strand" evidence="12">
    <location>
        <begin position="2586"/>
        <end position="2588"/>
    </location>
</feature>
<feature type="strand" evidence="12">
    <location>
        <begin position="2590"/>
        <end position="2597"/>
    </location>
</feature>
<feature type="strand" evidence="12">
    <location>
        <begin position="2600"/>
        <end position="2605"/>
    </location>
</feature>
<feature type="strand" evidence="12">
    <location>
        <begin position="2611"/>
        <end position="2614"/>
    </location>
</feature>
<feature type="helix" evidence="12">
    <location>
        <begin position="2617"/>
        <end position="2619"/>
    </location>
</feature>
<feature type="strand" evidence="12">
    <location>
        <begin position="2627"/>
        <end position="2633"/>
    </location>
</feature>
<feature type="strand" evidence="12">
    <location>
        <begin position="2651"/>
        <end position="2658"/>
    </location>
</feature>
<feature type="helix" evidence="12">
    <location>
        <begin position="2665"/>
        <end position="2667"/>
    </location>
</feature>
<feature type="strand" evidence="12">
    <location>
        <begin position="2669"/>
        <end position="2676"/>
    </location>
</feature>
<feature type="strand" evidence="11">
    <location>
        <begin position="2731"/>
        <end position="2735"/>
    </location>
</feature>
<feature type="strand" evidence="11">
    <location>
        <begin position="2742"/>
        <end position="2753"/>
    </location>
</feature>
<feature type="strand" evidence="11">
    <location>
        <begin position="2758"/>
        <end position="2764"/>
    </location>
</feature>
<feature type="strand" evidence="11">
    <location>
        <begin position="2768"/>
        <end position="2777"/>
    </location>
</feature>
<feature type="strand" evidence="11">
    <location>
        <begin position="2780"/>
        <end position="2786"/>
    </location>
</feature>
<feature type="strand" evidence="11">
    <location>
        <begin position="2791"/>
        <end position="2795"/>
    </location>
</feature>
<feature type="strand" evidence="11">
    <location>
        <begin position="2802"/>
        <end position="2804"/>
    </location>
</feature>
<feature type="strand" evidence="11">
    <location>
        <begin position="2806"/>
        <end position="2813"/>
    </location>
</feature>
<feature type="strand" evidence="11">
    <location>
        <begin position="2816"/>
        <end position="2821"/>
    </location>
</feature>
<feature type="strand" evidence="11">
    <location>
        <begin position="2842"/>
        <end position="2848"/>
    </location>
</feature>
<feature type="strand" evidence="11">
    <location>
        <begin position="2867"/>
        <end position="2874"/>
    </location>
</feature>
<feature type="strand" evidence="11">
    <location>
        <begin position="2885"/>
        <end position="2889"/>
    </location>
</feature>
<feature type="strand" evidence="11">
    <location>
        <begin position="2894"/>
        <end position="2916"/>
    </location>
</feature>
<feature type="strand" evidence="11">
    <location>
        <begin position="2922"/>
        <end position="2931"/>
    </location>
</feature>
<feature type="strand" evidence="11">
    <location>
        <begin position="2935"/>
        <end position="2941"/>
    </location>
</feature>
<feature type="strand" evidence="11">
    <location>
        <begin position="2943"/>
        <end position="2945"/>
    </location>
</feature>
<feature type="strand" evidence="11">
    <location>
        <begin position="2947"/>
        <end position="2953"/>
    </location>
</feature>
<feature type="strand" evidence="11">
    <location>
        <begin position="2956"/>
        <end position="2965"/>
    </location>
</feature>
<feature type="strand" evidence="11">
    <location>
        <begin position="2967"/>
        <end position="2972"/>
    </location>
</feature>
<feature type="helix" evidence="11">
    <location>
        <begin position="2979"/>
        <end position="2981"/>
    </location>
</feature>
<feature type="strand" evidence="11">
    <location>
        <begin position="2982"/>
        <end position="2984"/>
    </location>
</feature>
<feature type="strand" evidence="11">
    <location>
        <begin position="2986"/>
        <end position="2993"/>
    </location>
</feature>
<feature type="strand" evidence="11">
    <location>
        <begin position="2996"/>
        <end position="3001"/>
    </location>
</feature>
<feature type="strand" evidence="11">
    <location>
        <begin position="3004"/>
        <end position="3008"/>
    </location>
</feature>
<feature type="strand" evidence="11">
    <location>
        <begin position="3022"/>
        <end position="3027"/>
    </location>
</feature>
<feature type="strand" evidence="11">
    <location>
        <begin position="3045"/>
        <end position="3053"/>
    </location>
</feature>
<feature type="helix" evidence="11">
    <location>
        <begin position="3064"/>
        <end position="3066"/>
    </location>
</feature>
<feature type="strand" evidence="11">
    <location>
        <begin position="3068"/>
        <end position="3074"/>
    </location>
</feature>
<feature type="strand" evidence="11">
    <location>
        <begin position="3078"/>
        <end position="3080"/>
    </location>
</feature>
<name>LAMA1_MOUSE</name>
<gene>
    <name type="primary">Lama1</name>
    <name type="synonym">Lama</name>
    <name type="synonym">Lama-1</name>
</gene>
<reference key="1">
    <citation type="journal article" date="1988" name="J. Biol. Chem.">
        <title>Laminin, a multidomain protein. The A chain has a unique globular domain and homology with the basement membrane proteoglycan and the laminin B chains.</title>
        <authorList>
            <person name="Sasaki M."/>
            <person name="Kleinman H.K."/>
            <person name="Huber H."/>
            <person name="Deutzmann R."/>
            <person name="Yamada Y."/>
        </authorList>
    </citation>
    <scope>NUCLEOTIDE SEQUENCE [MRNA]</scope>
    <scope>PARTIAL PROTEIN SEQUENCE</scope>
</reference>
<reference evidence="10" key="2">
    <citation type="journal article" date="2009" name="PLoS Biol.">
        <title>Lineage-specific biology revealed by a finished genome assembly of the mouse.</title>
        <authorList>
            <person name="Church D.M."/>
            <person name="Goodstadt L."/>
            <person name="Hillier L.W."/>
            <person name="Zody M.C."/>
            <person name="Goldstein S."/>
            <person name="She X."/>
            <person name="Bult C.J."/>
            <person name="Agarwala R."/>
            <person name="Cherry J.L."/>
            <person name="DiCuccio M."/>
            <person name="Hlavina W."/>
            <person name="Kapustin Y."/>
            <person name="Meric P."/>
            <person name="Maglott D."/>
            <person name="Birtle Z."/>
            <person name="Marques A.C."/>
            <person name="Graves T."/>
            <person name="Zhou S."/>
            <person name="Teague B."/>
            <person name="Potamousis K."/>
            <person name="Churas C."/>
            <person name="Place M."/>
            <person name="Herschleb J."/>
            <person name="Runnheim R."/>
            <person name="Forrest D."/>
            <person name="Amos-Landgraf J."/>
            <person name="Schwartz D.C."/>
            <person name="Cheng Z."/>
            <person name="Lindblad-Toh K."/>
            <person name="Eichler E.E."/>
            <person name="Ponting C.P."/>
        </authorList>
    </citation>
    <scope>NUCLEOTIDE SEQUENCE [LARGE SCALE GENOMIC DNA]</scope>
    <source>
        <strain evidence="10">C57BL/6J</strain>
    </source>
</reference>
<reference key="3">
    <citation type="journal article" date="1988" name="Eur. J. Biochem.">
        <title>The N-terminus of laminin A chain is homologous to the B chains.</title>
        <authorList>
            <person name="Hartl L."/>
            <person name="Oberbaeumer I."/>
            <person name="Deutzmann R."/>
        </authorList>
    </citation>
    <scope>NUCLEOTIDE SEQUENCE [MRNA] OF 1-339</scope>
</reference>
<reference key="4">
    <citation type="journal article" date="1988" name="Eur. J. Biochem.">
        <title>Structural study of long arm fragments of laminin. Evidence for repetitive C-terminal sequences in the A-chain, not present in the B-chains.</title>
        <authorList>
            <person name="Deutzmann R."/>
            <person name="Huber J."/>
            <person name="Schmetz K.A."/>
            <person name="Oberbaeumer I."/>
            <person name="Hartl L."/>
        </authorList>
    </citation>
    <scope>NUCLEOTIDE SEQUENCE [MRNA] OF 2537-3083</scope>
    <scope>PARTIAL PROTEIN SEQUENCE</scope>
</reference>
<reference key="5">
    <citation type="journal article" date="2002" name="Biochem. J.">
        <title>Complete sequence, recombinant analysis and binding to laminins and sulphated ligands of the N-terminal domains of laminin alpha3B and alpha5 chains.</title>
        <authorList>
            <person name="Garbe J.H."/>
            <person name="Gohring W."/>
            <person name="Mann K."/>
            <person name="Timpl R."/>
            <person name="Sasaki T."/>
        </authorList>
    </citation>
    <scope>PROTEIN SEQUENCE OF 25-32</scope>
    <scope>PYROGLUTAMATE FORMATION AT GLN-25</scope>
</reference>
<reference key="6">
    <citation type="journal article" date="1993" name="Eur. J. Biochem.">
        <title>Sequence of extracellular mouse protein BM-90/fibulin and its calcium-dependent binding to other basement-membrane ligands.</title>
        <authorList>
            <person name="Pan T.-C."/>
            <person name="Kluge M."/>
            <person name="Zhang R.Z."/>
            <person name="Mayer U."/>
            <person name="Timpl R."/>
            <person name="Chu M.-L."/>
        </authorList>
    </citation>
    <scope>INTERACTION WITH FBLN1</scope>
</reference>
<reference key="7">
    <citation type="journal article" date="2009" name="Nat. Biotechnol.">
        <title>Mass-spectrometric identification and relative quantification of N-linked cell surface glycoproteins.</title>
        <authorList>
            <person name="Wollscheid B."/>
            <person name="Bausch-Fluck D."/>
            <person name="Henderson C."/>
            <person name="O'Brien R."/>
            <person name="Bibel M."/>
            <person name="Schiess R."/>
            <person name="Aebersold R."/>
            <person name="Watts J.D."/>
        </authorList>
    </citation>
    <scope>GLYCOSYLATION [LARGE SCALE ANALYSIS] AT ASN-1344; ASN-1686; ASN-1718; ASN-1725; ASN-1763; ASN-1935; ASN-2026; ASN-2045; ASN-2066 AND ASN-2834</scope>
</reference>
<reference key="8">
    <citation type="journal article" date="2010" name="Cell">
        <title>A tissue-specific atlas of mouse protein phosphorylation and expression.</title>
        <authorList>
            <person name="Huttlin E.L."/>
            <person name="Jedrychowski M.P."/>
            <person name="Elias J.E."/>
            <person name="Goswami T."/>
            <person name="Rad R."/>
            <person name="Beausoleil S.A."/>
            <person name="Villen J."/>
            <person name="Haas W."/>
            <person name="Sowa M.E."/>
            <person name="Gygi S.P."/>
        </authorList>
    </citation>
    <scope>IDENTIFICATION BY MASS SPECTROMETRY [LARGE SCALE ANALYSIS]</scope>
    <source>
        <tissue>Liver</tissue>
        <tissue>Testis</tissue>
    </source>
</reference>
<keyword id="KW-0002">3D-structure</keyword>
<keyword id="KW-0084">Basement membrane</keyword>
<keyword id="KW-0130">Cell adhesion</keyword>
<keyword id="KW-0175">Coiled coil</keyword>
<keyword id="KW-0903">Direct protein sequencing</keyword>
<keyword id="KW-1015">Disulfide bond</keyword>
<keyword id="KW-0272">Extracellular matrix</keyword>
<keyword id="KW-0325">Glycoprotein</keyword>
<keyword id="KW-0424">Laminin EGF-like domain</keyword>
<keyword id="KW-0597">Phosphoprotein</keyword>
<keyword id="KW-0873">Pyrrolidone carboxylic acid</keyword>
<keyword id="KW-1185">Reference proteome</keyword>
<keyword id="KW-0677">Repeat</keyword>
<keyword id="KW-0964">Secreted</keyword>
<keyword id="KW-0732">Signal</keyword>
<evidence type="ECO:0000250" key="1">
    <source>
        <dbReference type="UniProtKB" id="P25391"/>
    </source>
</evidence>
<evidence type="ECO:0000255" key="2"/>
<evidence type="ECO:0000255" key="3">
    <source>
        <dbReference type="PROSITE-ProRule" id="PRU00122"/>
    </source>
</evidence>
<evidence type="ECO:0000255" key="4">
    <source>
        <dbReference type="PROSITE-ProRule" id="PRU00458"/>
    </source>
</evidence>
<evidence type="ECO:0000255" key="5">
    <source>
        <dbReference type="PROSITE-ProRule" id="PRU00460"/>
    </source>
</evidence>
<evidence type="ECO:0000255" key="6">
    <source>
        <dbReference type="PROSITE-ProRule" id="PRU00466"/>
    </source>
</evidence>
<evidence type="ECO:0000269" key="7">
    <source>
    </source>
</evidence>
<evidence type="ECO:0000269" key="8">
    <source>
    </source>
</evidence>
<evidence type="ECO:0000305" key="9"/>
<evidence type="ECO:0000312" key="10">
    <source>
        <dbReference type="Proteomes" id="UP000000589"/>
    </source>
</evidence>
<evidence type="ECO:0007829" key="11">
    <source>
        <dbReference type="PDB" id="2JD4"/>
    </source>
</evidence>
<evidence type="ECO:0007829" key="12">
    <source>
        <dbReference type="PDB" id="5MC9"/>
    </source>
</evidence>
<dbReference type="EMBL" id="J04064">
    <property type="protein sequence ID" value="AAA39410.1"/>
    <property type="molecule type" value="mRNA"/>
</dbReference>
<dbReference type="EMBL" id="AC154823">
    <property type="status" value="NOT_ANNOTATED_CDS"/>
    <property type="molecule type" value="Genomic_DNA"/>
</dbReference>
<dbReference type="EMBL" id="X07737">
    <property type="protein sequence ID" value="CAA30561.1"/>
    <property type="molecule type" value="mRNA"/>
</dbReference>
<dbReference type="EMBL" id="X13459">
    <property type="protein sequence ID" value="CAA31807.1"/>
    <property type="molecule type" value="mRNA"/>
</dbReference>
<dbReference type="EMBL" id="M36775">
    <property type="protein sequence ID" value="AAA39406.1"/>
    <property type="molecule type" value="mRNA"/>
</dbReference>
<dbReference type="CCDS" id="CCDS37681.1"/>
<dbReference type="PIR" id="A31771">
    <property type="entry name" value="MMMSA"/>
</dbReference>
<dbReference type="RefSeq" id="NP_032506.2">
    <property type="nucleotide sequence ID" value="NM_008480.2"/>
</dbReference>
<dbReference type="PDB" id="2JD4">
    <property type="method" value="X-ray"/>
    <property type="resolution" value="1.90 A"/>
    <property type="chains" value="A/B=2705-3083"/>
</dbReference>
<dbReference type="PDB" id="5MC9">
    <property type="method" value="X-ray"/>
    <property type="resolution" value="2.13 A"/>
    <property type="chains" value="A=2078-2706"/>
</dbReference>
<dbReference type="PDB" id="8DMK">
    <property type="method" value="EM"/>
    <property type="resolution" value="3.70 A"/>
    <property type="chains" value="A=28-332"/>
</dbReference>
<dbReference type="PDBsum" id="2JD4"/>
<dbReference type="PDBsum" id="5MC9"/>
<dbReference type="PDBsum" id="8DMK"/>
<dbReference type="EMDB" id="EMD-27542"/>
<dbReference type="SMR" id="P19137"/>
<dbReference type="BioGRID" id="201096">
    <property type="interactions" value="15"/>
</dbReference>
<dbReference type="ComplexPortal" id="CPX-3008">
    <property type="entry name" value="Laminin-111 complex"/>
</dbReference>
<dbReference type="ComplexPortal" id="CPX-3010">
    <property type="entry name" value="Laminin-121 complex"/>
</dbReference>
<dbReference type="FunCoup" id="P19137">
    <property type="interactions" value="384"/>
</dbReference>
<dbReference type="IntAct" id="P19137">
    <property type="interactions" value="5"/>
</dbReference>
<dbReference type="MINT" id="P19137"/>
<dbReference type="STRING" id="10090.ENSMUSP00000043957"/>
<dbReference type="GlyConnect" id="2455">
    <property type="glycosylation" value="4 N-Linked glycans (3 sites)"/>
</dbReference>
<dbReference type="GlyCosmos" id="P19137">
    <property type="glycosylation" value="17 sites, 4 glycans"/>
</dbReference>
<dbReference type="GlyGen" id="P19137">
    <property type="glycosylation" value="34 sites, 22 N-linked glycans (29 sites), 1 O-linked glycan (1 site)"/>
</dbReference>
<dbReference type="iPTMnet" id="P19137"/>
<dbReference type="MetOSite" id="P19137"/>
<dbReference type="PhosphoSitePlus" id="P19137"/>
<dbReference type="SwissPalm" id="P19137"/>
<dbReference type="PaxDb" id="10090-ENSMUSP00000043957"/>
<dbReference type="PeptideAtlas" id="P19137"/>
<dbReference type="ProteomicsDB" id="265033"/>
<dbReference type="ProteomicsDB" id="308736"/>
<dbReference type="ABCD" id="P19137">
    <property type="antibodies" value="23 sequenced antibodies"/>
</dbReference>
<dbReference type="Antibodypedia" id="4123">
    <property type="antibodies" value="333 antibodies from 30 providers"/>
</dbReference>
<dbReference type="DNASU" id="16772"/>
<dbReference type="Ensembl" id="ENSMUST00000035471.9">
    <property type="protein sequence ID" value="ENSMUSP00000043957.8"/>
    <property type="gene ID" value="ENSMUSG00000032796.9"/>
</dbReference>
<dbReference type="GeneID" id="16772"/>
<dbReference type="KEGG" id="mmu:16772"/>
<dbReference type="AGR" id="MGI:99892"/>
<dbReference type="CTD" id="284217"/>
<dbReference type="MGI" id="MGI:99892">
    <property type="gene designation" value="Lama1"/>
</dbReference>
<dbReference type="VEuPathDB" id="HostDB:ENSMUSG00000032796"/>
<dbReference type="eggNOG" id="KOG1836">
    <property type="taxonomic scope" value="Eukaryota"/>
</dbReference>
<dbReference type="GeneTree" id="ENSGT00940000157124"/>
<dbReference type="HOGENOM" id="CLU_000301_0_0_1"/>
<dbReference type="InParanoid" id="P19137"/>
<dbReference type="OMA" id="TVRQHVH"/>
<dbReference type="OrthoDB" id="13443at9989"/>
<dbReference type="PhylomeDB" id="P19137"/>
<dbReference type="TreeFam" id="TF335359"/>
<dbReference type="BioGRID-ORCS" id="16772">
    <property type="hits" value="1 hit in 80 CRISPR screens"/>
</dbReference>
<dbReference type="ChiTaRS" id="Lama1">
    <property type="organism name" value="mouse"/>
</dbReference>
<dbReference type="EvolutionaryTrace" id="P19137"/>
<dbReference type="PRO" id="PR:P19137"/>
<dbReference type="Proteomes" id="UP000000589">
    <property type="component" value="Chromosome 17"/>
</dbReference>
<dbReference type="RNAct" id="P19137">
    <property type="molecule type" value="protein"/>
</dbReference>
<dbReference type="Bgee" id="ENSMUSG00000032796">
    <property type="expression patterns" value="Expressed in glomerular capsule and 184 other cell types or tissues"/>
</dbReference>
<dbReference type="GO" id="GO:0005604">
    <property type="term" value="C:basement membrane"/>
    <property type="evidence" value="ECO:0000314"/>
    <property type="project" value="UniProtKB"/>
</dbReference>
<dbReference type="GO" id="GO:0005911">
    <property type="term" value="C:cell-cell junction"/>
    <property type="evidence" value="ECO:0000314"/>
    <property type="project" value="MGI"/>
</dbReference>
<dbReference type="GO" id="GO:0062023">
    <property type="term" value="C:collagen-containing extracellular matrix"/>
    <property type="evidence" value="ECO:0007005"/>
    <property type="project" value="BHF-UCL"/>
</dbReference>
<dbReference type="GO" id="GO:0031012">
    <property type="term" value="C:extracellular matrix"/>
    <property type="evidence" value="ECO:0000314"/>
    <property type="project" value="MGI"/>
</dbReference>
<dbReference type="GO" id="GO:0005576">
    <property type="term" value="C:extracellular region"/>
    <property type="evidence" value="ECO:0000304"/>
    <property type="project" value="Reactome"/>
</dbReference>
<dbReference type="GO" id="GO:0005615">
    <property type="term" value="C:extracellular space"/>
    <property type="evidence" value="ECO:0007005"/>
    <property type="project" value="BHF-UCL"/>
</dbReference>
<dbReference type="GO" id="GO:0043256">
    <property type="term" value="C:laminin complex"/>
    <property type="evidence" value="ECO:0000314"/>
    <property type="project" value="MGI"/>
</dbReference>
<dbReference type="GO" id="GO:0005606">
    <property type="term" value="C:laminin-1 complex"/>
    <property type="evidence" value="ECO:0000314"/>
    <property type="project" value="MGI"/>
</dbReference>
<dbReference type="GO" id="GO:0005608">
    <property type="term" value="C:laminin-3 complex"/>
    <property type="evidence" value="ECO:0007669"/>
    <property type="project" value="Ensembl"/>
</dbReference>
<dbReference type="GO" id="GO:0016020">
    <property type="term" value="C:membrane"/>
    <property type="evidence" value="ECO:0007669"/>
    <property type="project" value="Ensembl"/>
</dbReference>
<dbReference type="GO" id="GO:0098637">
    <property type="term" value="C:protein complex involved in cell-matrix adhesion"/>
    <property type="evidence" value="ECO:0000303"/>
    <property type="project" value="ComplexPortal"/>
</dbReference>
<dbReference type="GO" id="GO:0005201">
    <property type="term" value="F:extracellular matrix structural constituent"/>
    <property type="evidence" value="ECO:0000314"/>
    <property type="project" value="MGI"/>
</dbReference>
<dbReference type="GO" id="GO:0043208">
    <property type="term" value="F:glycosphingolipid binding"/>
    <property type="evidence" value="ECO:0000314"/>
    <property type="project" value="MGI"/>
</dbReference>
<dbReference type="GO" id="GO:0005102">
    <property type="term" value="F:signaling receptor binding"/>
    <property type="evidence" value="ECO:0007669"/>
    <property type="project" value="InterPro"/>
</dbReference>
<dbReference type="GO" id="GO:0060445">
    <property type="term" value="P:branching involved in salivary gland morphogenesis"/>
    <property type="evidence" value="ECO:0000315"/>
    <property type="project" value="MGI"/>
</dbReference>
<dbReference type="GO" id="GO:0007155">
    <property type="term" value="P:cell adhesion"/>
    <property type="evidence" value="ECO:0007669"/>
    <property type="project" value="UniProtKB-KW"/>
</dbReference>
<dbReference type="GO" id="GO:0007166">
    <property type="term" value="P:cell surface receptor signaling pathway"/>
    <property type="evidence" value="ECO:0000314"/>
    <property type="project" value="MGI"/>
</dbReference>
<dbReference type="GO" id="GO:0060441">
    <property type="term" value="P:epithelial tube branching involved in lung morphogenesis"/>
    <property type="evidence" value="ECO:0000315"/>
    <property type="project" value="MGI"/>
</dbReference>
<dbReference type="GO" id="GO:0045198">
    <property type="term" value="P:establishment of epithelial cell apical/basal polarity"/>
    <property type="evidence" value="ECO:0000315"/>
    <property type="project" value="MGI"/>
</dbReference>
<dbReference type="GO" id="GO:0002011">
    <property type="term" value="P:morphogenesis of an epithelial sheet"/>
    <property type="evidence" value="ECO:0000315"/>
    <property type="project" value="MGI"/>
</dbReference>
<dbReference type="GO" id="GO:0031175">
    <property type="term" value="P:neuron projection development"/>
    <property type="evidence" value="ECO:0000314"/>
    <property type="project" value="MGI"/>
</dbReference>
<dbReference type="GO" id="GO:0045785">
    <property type="term" value="P:positive regulation of cell adhesion"/>
    <property type="evidence" value="ECO:0000303"/>
    <property type="project" value="ComplexPortal"/>
</dbReference>
<dbReference type="GO" id="GO:2001046">
    <property type="term" value="P:positive regulation of integrin-mediated signaling pathway"/>
    <property type="evidence" value="ECO:0000303"/>
    <property type="project" value="ComplexPortal"/>
</dbReference>
<dbReference type="GO" id="GO:0051149">
    <property type="term" value="P:positive regulation of muscle cell differentiation"/>
    <property type="evidence" value="ECO:0000303"/>
    <property type="project" value="ComplexPortal"/>
</dbReference>
<dbReference type="GO" id="GO:0006468">
    <property type="term" value="P:protein phosphorylation"/>
    <property type="evidence" value="ECO:0000314"/>
    <property type="project" value="CACAO"/>
</dbReference>
<dbReference type="GO" id="GO:0110011">
    <property type="term" value="P:regulation of basement membrane organization"/>
    <property type="evidence" value="ECO:0000303"/>
    <property type="project" value="ComplexPortal"/>
</dbReference>
<dbReference type="GO" id="GO:0030334">
    <property type="term" value="P:regulation of cell migration"/>
    <property type="evidence" value="ECO:0007669"/>
    <property type="project" value="InterPro"/>
</dbReference>
<dbReference type="GO" id="GO:0045995">
    <property type="term" value="P:regulation of embryonic development"/>
    <property type="evidence" value="ECO:0007669"/>
    <property type="project" value="InterPro"/>
</dbReference>
<dbReference type="GO" id="GO:0060041">
    <property type="term" value="P:retina development in camera-type eye"/>
    <property type="evidence" value="ECO:0000315"/>
    <property type="project" value="MGI"/>
</dbReference>
<dbReference type="GO" id="GO:0061304">
    <property type="term" value="P:retinal blood vessel morphogenesis"/>
    <property type="evidence" value="ECO:0000315"/>
    <property type="project" value="MGI"/>
</dbReference>
<dbReference type="GO" id="GO:0009888">
    <property type="term" value="P:tissue development"/>
    <property type="evidence" value="ECO:0000315"/>
    <property type="project" value="MGI"/>
</dbReference>
<dbReference type="CDD" id="cd00055">
    <property type="entry name" value="EGF_Lam"/>
    <property type="match status" value="15"/>
</dbReference>
<dbReference type="CDD" id="cd00110">
    <property type="entry name" value="LamG"/>
    <property type="match status" value="5"/>
</dbReference>
<dbReference type="FunFam" id="2.10.25.10:FF:000074">
    <property type="entry name" value="Laminin subunit alpha"/>
    <property type="match status" value="1"/>
</dbReference>
<dbReference type="FunFam" id="2.10.25.10:FF:000069">
    <property type="entry name" value="Laminin subunit alpha 1"/>
    <property type="match status" value="1"/>
</dbReference>
<dbReference type="FunFam" id="2.10.25.10:FF:000082">
    <property type="entry name" value="Laminin subunit alpha 1"/>
    <property type="match status" value="2"/>
</dbReference>
<dbReference type="FunFam" id="2.10.25.10:FF:000242">
    <property type="entry name" value="Laminin subunit alpha 1"/>
    <property type="match status" value="1"/>
</dbReference>
<dbReference type="FunFam" id="2.10.25.10:FF:000454">
    <property type="entry name" value="Laminin subunit alpha 1"/>
    <property type="match status" value="1"/>
</dbReference>
<dbReference type="FunFam" id="2.10.25.10:FF:000512">
    <property type="entry name" value="Laminin subunit alpha 1"/>
    <property type="match status" value="1"/>
</dbReference>
<dbReference type="FunFam" id="2.10.25.10:FF:000629">
    <property type="entry name" value="Laminin subunit alpha 1"/>
    <property type="match status" value="1"/>
</dbReference>
<dbReference type="FunFam" id="2.60.120.200:FF:000098">
    <property type="entry name" value="Laminin subunit alpha 1"/>
    <property type="match status" value="1"/>
</dbReference>
<dbReference type="FunFam" id="2.60.120.200:FF:000116">
    <property type="entry name" value="Laminin subunit alpha 1"/>
    <property type="match status" value="1"/>
</dbReference>
<dbReference type="FunFam" id="2.60.120.200:FF:000119">
    <property type="entry name" value="Laminin subunit alpha 1"/>
    <property type="match status" value="1"/>
</dbReference>
<dbReference type="FunFam" id="2.60.120.200:FF:000127">
    <property type="entry name" value="Laminin subunit alpha 1"/>
    <property type="match status" value="1"/>
</dbReference>
<dbReference type="FunFam" id="2.60.120.200:FF:000161">
    <property type="entry name" value="Laminin subunit alpha 1"/>
    <property type="match status" value="1"/>
</dbReference>
<dbReference type="FunFam" id="2.10.25.10:FF:000033">
    <property type="entry name" value="Laminin subunit alpha 2"/>
    <property type="match status" value="1"/>
</dbReference>
<dbReference type="FunFam" id="2.10.25.10:FF:000189">
    <property type="entry name" value="Laminin subunit alpha 2"/>
    <property type="match status" value="1"/>
</dbReference>
<dbReference type="FunFam" id="2.10.25.10:FF:000250">
    <property type="entry name" value="Laminin subunit alpha 2"/>
    <property type="match status" value="1"/>
</dbReference>
<dbReference type="FunFam" id="2.170.300.10:FF:000008">
    <property type="entry name" value="Laminin subunit alpha 2"/>
    <property type="match status" value="1"/>
</dbReference>
<dbReference type="FunFam" id="2.60.120.260:FF:000017">
    <property type="entry name" value="Laminin subunit alpha 2"/>
    <property type="match status" value="1"/>
</dbReference>
<dbReference type="FunFam" id="2.10.25.10:FF:000051">
    <property type="entry name" value="Laminin subunit alpha 4"/>
    <property type="match status" value="1"/>
</dbReference>
<dbReference type="FunFam" id="2.10.25.10:FF:000094">
    <property type="entry name" value="Laminin subunit alpha-2"/>
    <property type="match status" value="1"/>
</dbReference>
<dbReference type="FunFam" id="2.10.25.10:FF:000128">
    <property type="entry name" value="laminin subunit alpha-2 isoform X1"/>
    <property type="match status" value="1"/>
</dbReference>
<dbReference type="FunFam" id="2.170.300.10:FF:000026">
    <property type="entry name" value="laminin subunit alpha-2 isoform X2"/>
    <property type="match status" value="1"/>
</dbReference>
<dbReference type="FunFam" id="2.10.25.10:FF:000065">
    <property type="entry name" value="Laminin subunit beta 1"/>
    <property type="match status" value="1"/>
</dbReference>
<dbReference type="Gene3D" id="2.60.120.200">
    <property type="match status" value="5"/>
</dbReference>
<dbReference type="Gene3D" id="2.60.120.260">
    <property type="entry name" value="Galactose-binding domain-like"/>
    <property type="match status" value="1"/>
</dbReference>
<dbReference type="Gene3D" id="2.10.25.10">
    <property type="entry name" value="Laminin"/>
    <property type="match status" value="15"/>
</dbReference>
<dbReference type="Gene3D" id="2.170.300.10">
    <property type="entry name" value="Tie2 ligand-binding domain superfamily"/>
    <property type="match status" value="1"/>
</dbReference>
<dbReference type="InterPro" id="IPR013320">
    <property type="entry name" value="ConA-like_dom_sf"/>
</dbReference>
<dbReference type="InterPro" id="IPR000742">
    <property type="entry name" value="EGF-like_dom"/>
</dbReference>
<dbReference type="InterPro" id="IPR050440">
    <property type="entry name" value="Laminin/Netrin_ECM"/>
</dbReference>
<dbReference type="InterPro" id="IPR009254">
    <property type="entry name" value="Laminin_aI"/>
</dbReference>
<dbReference type="InterPro" id="IPR010307">
    <property type="entry name" value="Laminin_dom_II"/>
</dbReference>
<dbReference type="InterPro" id="IPR001791">
    <property type="entry name" value="Laminin_G"/>
</dbReference>
<dbReference type="InterPro" id="IPR000034">
    <property type="entry name" value="Laminin_IV"/>
</dbReference>
<dbReference type="InterPro" id="IPR008211">
    <property type="entry name" value="Laminin_N"/>
</dbReference>
<dbReference type="InterPro" id="IPR002049">
    <property type="entry name" value="LE_dom"/>
</dbReference>
<dbReference type="InterPro" id="IPR056863">
    <property type="entry name" value="LMN_ATRN_NET-like_EGF"/>
</dbReference>
<dbReference type="PANTHER" id="PTHR10574:SF409">
    <property type="entry name" value="LAMININ SUBUNIT ALPHA-1"/>
    <property type="match status" value="1"/>
</dbReference>
<dbReference type="PANTHER" id="PTHR10574">
    <property type="entry name" value="NETRIN/LAMININ-RELATED"/>
    <property type="match status" value="1"/>
</dbReference>
<dbReference type="Pfam" id="PF00053">
    <property type="entry name" value="EGF_laminin"/>
    <property type="match status" value="15"/>
</dbReference>
<dbReference type="Pfam" id="PF24973">
    <property type="entry name" value="EGF_LMN_ATRN"/>
    <property type="match status" value="2"/>
</dbReference>
<dbReference type="Pfam" id="PF00052">
    <property type="entry name" value="Laminin_B"/>
    <property type="match status" value="2"/>
</dbReference>
<dbReference type="Pfam" id="PF00054">
    <property type="entry name" value="Laminin_G_1"/>
    <property type="match status" value="4"/>
</dbReference>
<dbReference type="Pfam" id="PF02210">
    <property type="entry name" value="Laminin_G_2"/>
    <property type="match status" value="1"/>
</dbReference>
<dbReference type="Pfam" id="PF06008">
    <property type="entry name" value="Laminin_I"/>
    <property type="match status" value="1"/>
</dbReference>
<dbReference type="Pfam" id="PF06009">
    <property type="entry name" value="Laminin_II"/>
    <property type="match status" value="1"/>
</dbReference>
<dbReference type="Pfam" id="PF00055">
    <property type="entry name" value="Laminin_N"/>
    <property type="match status" value="1"/>
</dbReference>
<dbReference type="PRINTS" id="PR00011">
    <property type="entry name" value="EGFLAMININ"/>
</dbReference>
<dbReference type="SMART" id="SM00181">
    <property type="entry name" value="EGF"/>
    <property type="match status" value="10"/>
</dbReference>
<dbReference type="SMART" id="SM00180">
    <property type="entry name" value="EGF_Lam"/>
    <property type="match status" value="16"/>
</dbReference>
<dbReference type="SMART" id="SM00281">
    <property type="entry name" value="LamB"/>
    <property type="match status" value="2"/>
</dbReference>
<dbReference type="SMART" id="SM00282">
    <property type="entry name" value="LamG"/>
    <property type="match status" value="5"/>
</dbReference>
<dbReference type="SMART" id="SM00136">
    <property type="entry name" value="LamNT"/>
    <property type="match status" value="1"/>
</dbReference>
<dbReference type="SUPFAM" id="SSF49899">
    <property type="entry name" value="Concanavalin A-like lectins/glucanases"/>
    <property type="match status" value="5"/>
</dbReference>
<dbReference type="SUPFAM" id="SSF57196">
    <property type="entry name" value="EGF/Laminin"/>
    <property type="match status" value="14"/>
</dbReference>
<dbReference type="PROSITE" id="PS00022">
    <property type="entry name" value="EGF_1"/>
    <property type="match status" value="11"/>
</dbReference>
<dbReference type="PROSITE" id="PS01186">
    <property type="entry name" value="EGF_2"/>
    <property type="match status" value="3"/>
</dbReference>
<dbReference type="PROSITE" id="PS01248">
    <property type="entry name" value="EGF_LAM_1"/>
    <property type="match status" value="15"/>
</dbReference>
<dbReference type="PROSITE" id="PS50027">
    <property type="entry name" value="EGF_LAM_2"/>
    <property type="match status" value="15"/>
</dbReference>
<dbReference type="PROSITE" id="PS50025">
    <property type="entry name" value="LAM_G_DOMAIN"/>
    <property type="match status" value="5"/>
</dbReference>
<dbReference type="PROSITE" id="PS51115">
    <property type="entry name" value="LAMININ_IVA"/>
    <property type="match status" value="2"/>
</dbReference>
<dbReference type="PROSITE" id="PS51117">
    <property type="entry name" value="LAMININ_NTER"/>
    <property type="match status" value="1"/>
</dbReference>
<sequence>MRGSGTGAALLVLLASVLWVTVRSQQRGLFPAILNLATNAHISANATCGEKGPEMFCKLVEHVPGRPVRHAQCRVCDGNSTNPRERHPISHAIDGTNNWWQSPSIQNGREYHWVTVTLDLRQVFQVAYIIIKAANAPRPGNWILERSVDGVKFKPWQYYAVSDTECLTRYKITPRRGPPTYRADNEVICTSYYSKLVPLEHGEIHTSLINGRPSADDPSPQLLEFTSARYIRLRLQRIRTLNADLMTLSHRDLRDLDPIVTRRYYYSIKDISVGGMCICYGHASSCPWDEEAKQLQCQCEHNTCGESCDRCCPGYHQQPWRPGTISSGNECEECNCHNKAKDCYYDSSVAKERRSLNTAGQYSGGGVCVNCSQNTTGINCETCIDQYYRPHKVSPYDDHPCRPCNCDPVGSLSSVCIKDDRHADLANGKWPGQCPCRKGYAGDKCDRCQFGYRGFPNCIPCDCRTVGSLNEDPCIEPCLCKKNVEGKNCDRCKPGFYNLKERNPEGCSECFCFGVSGVCDSLTWSISQVTNMSGWLVTDLMSTNKIRSQQDVLGGHRQISINNTAVMQRLTSTYYWAAPEAYLGNKLTAFGGFLKYTVSYDIPVETVDSDLMSHADIIIKGNGLTISTRAEGLSLQPYEEYFNVVRLVPENFRDFDTRREIDRDQLMTVLANVTHLLIRANYNSAKMALYRLDSVSLDIASPNAIDLAVAADVEHCECPQGYTGTSCEACLPGYYRVDGILFGGICQPCECHGHASECDIHGICSVCTHNTTGDHCEQCLPGFYGTPSRGTPGDCQPCACPLSIDSNNFSPTCHLTDGEEVVCDQCAPGYSGSWCERCADGYYGNPTVPGGTCVPCNCSGNVDPLEAGHCDSVTGECLKCLWNTDGAHCERCADGFYGDAVTAKNCRACDCHENGSLSGICHLETGLCDCKPHVTGQQCDQCLSGYYGLDTGLGCVPCNCSVEGSVSDNCTEEGQCHCGPGVSGKQCDRCSHGFYAFQDGGCTPCDCAHTQNNCDPASGECLCPPHTQGLKCEECEEAYWGLDPEQGCQACNCSAVGSTSAQCDVLSGHCPCKKGFGGQSCHQCSLGYRSFPDCVPCGCDLRGTLPDTCDLEQGLCSCSEDGGTCSCKENAVGPQCSKCQAGTFALRGDNPQGCSPCFCFGLSQLCSELEGYVRTLITLASDQPLLHVVSQSNLKGTIEGVHFQPPDTLLDAEAVRQHIYAEPFYWRLPKQFQGDQLLAYGGKLQYSVAFYSTLGTGTSNYEPQVLIKGGRARKHVIYMDAPAPENGVRQDYEVRMKEEFWKYFNSVSEKHVTHSDFMSVLSNIDYILIKASYGQGLQQSRIANISMEVGRKAVELPAEGEAALLLELCVCPPGTAGHSCQDCAPGYYREKLPESGGRGPRPLLAPCVPCNCNNHSDVCDPETGKCLSCRDHTSGDHCELCASGYYGKVTGLPGDCTPCTCPHHPPFSFSPTCVVEGDSDFRCNACLPGYEGQYCERCSAGYHGNPRAAGGSCQTCDCNPQGSVHSDCDRASGQCVCKPGATGLHCEKCLPRHILMESDCVSCDDDCVGPLLNDLDSVGDAVLSLNLTGVSPAPYGILENLENTTKYFQRYLIKENAKKIRAEIQLEGIAEQTENLQKELTRVLARHQKVNAEMERTSNGTQALATFIEQLHANIKEITEKVATLNQTARKDFQPPVSALQSMHQNISSLLGLIKERNFTEMQQNATLELKAAKDLLSRIQKRFQKPQEKLKALKEANSLLSNHSEKLQAAEELLKEAGSKTQESNLLLLLVKANLKEFQEKKLRVQEEQNVTSELIAKGREWVDAAGTHTAAAQDTLTQLEHHRDELLLWARKIRSHVDDLVMQMSKRRARDLVHRAEQHASELQSRAGALDRDLENVRNVSLNATSAAHVHSNIQTLTEEAEMLAADAHKTANKTDLISESLASRGKAVLQRSSRFLKESVSTRRKQQGITMKLDELKNLTSQFQESMDNIMKQANDSLAMLRESPGGMREKGRKARELAAAANESAVKTLEDVLALSLRVFNTSEDLSRVNATVQETNDLLHNSTMTTLLAGRKMKDMEMQANLLLDRLKPLKTLEENLSRNLSEIKLLISRARKQVASIKVAVSADRDCIRAYQPQTSSTNYNTLILNVKTQEPDNLLFYLGSSSSSDFLAVEMRRGKVAFLWDLGSGSTRLEFPEVSINNNRWHSIYITRFGNMGSLSVKEASAAENPPVRTSKSPGPSKVLDINNSTLMFVGGLGGQIKKSPAVKVTHFKGCMGEAFLNGKSIGLWNYIEREGKCNGCFGSSQNEDSSFHFDGSGYAMVEKTLRPTVTQIVILFSTFSPNGLLFYLASNGTKDFLSIELVRGRVKVMVDLGSGPLTLMTDRRYNNGTWYKIAFQRNRKQGLLAVFDAYDTSDKETKQGETPGAASDLNRLEKDLIYVGGLPHSKAVRKGVSSRSYVGCIKNLEISRSTFDLLRNSYGVRKGCALEPIQSVSFLRGGYVEMPPKSLSPESSLLATFATKNSSGILLVALGKDAEEAGGAQAHVPFFSIMLLEGRIEVHVNSGDGTSLRKALLHAPTGSYSDGQEHSISLVRNRRVITIQVDENSPVEMKLGPLTEGKTIDISNLYIGGLPEDKATPMLKMRTSFHGCIKNVVLDAQLLDFTHATGSEQVELDTCLLAEEPMQSLHREHGELPPEPPTLPQPELCAVDTAPGYVAGAHQFGLSQNSHLVLPLNQSDVRKRLQVQLSIRTFASSGLIYYVAHQNQMDYATLQLQEGRLHFMFDLGKGRTKVSHPALLSDGKWHTVKTEYIKRKAFMTVDGQESPSVTVVGNATTLDVERKLYLGGLPSHYRARNIGTITHSIPACIGEIMVNGQQLDKDRPLSASAVDRCYVVAQEGTFFEGSGYAALVKEGYKVRLDLNITLEFRTTSKNGVLLGISSAKVDAIGLEIVDGKVLFHVNNGAGRITATYQPRAARALCDGKWHTLQAHKSKHRIVLTVDGNSVRAESPHTHSTSADTNDPIYVGGYPAHIKQNCLSSRASFRGCVRNLRLSRGSQVQSLDLSRAFDLQGVFPHSCPGPEP</sequence>
<accession>P19137</accession>
<accession>F8VQ40</accession>
<protein>
    <recommendedName>
        <fullName>Laminin subunit alpha-1</fullName>
    </recommendedName>
    <alternativeName>
        <fullName>Laminin A chain</fullName>
    </alternativeName>
    <alternativeName>
        <fullName>Laminin-1 subunit alpha</fullName>
    </alternativeName>
    <alternativeName>
        <fullName>Laminin-3 subunit alpha</fullName>
    </alternativeName>
    <alternativeName>
        <fullName>S-laminin subunit alpha</fullName>
        <shortName>S-LAM alpha</shortName>
    </alternativeName>
</protein>
<organism>
    <name type="scientific">Mus musculus</name>
    <name type="common">Mouse</name>
    <dbReference type="NCBI Taxonomy" id="10090"/>
    <lineage>
        <taxon>Eukaryota</taxon>
        <taxon>Metazoa</taxon>
        <taxon>Chordata</taxon>
        <taxon>Craniata</taxon>
        <taxon>Vertebrata</taxon>
        <taxon>Euteleostomi</taxon>
        <taxon>Mammalia</taxon>
        <taxon>Eutheria</taxon>
        <taxon>Euarchontoglires</taxon>
        <taxon>Glires</taxon>
        <taxon>Rodentia</taxon>
        <taxon>Myomorpha</taxon>
        <taxon>Muroidea</taxon>
        <taxon>Muridae</taxon>
        <taxon>Murinae</taxon>
        <taxon>Mus</taxon>
        <taxon>Mus</taxon>
    </lineage>
</organism>
<proteinExistence type="evidence at protein level"/>